<accession>Q5LI35</accession>
<feature type="chain" id="PRO_1000010683" description="Elongation factor P">
    <location>
        <begin position="1"/>
        <end position="188"/>
    </location>
</feature>
<organism>
    <name type="scientific">Bacteroides fragilis (strain ATCC 25285 / DSM 2151 / CCUG 4856 / JCM 11019 / LMG 10263 / NCTC 9343 / Onslow / VPI 2553 / EN-2)</name>
    <dbReference type="NCBI Taxonomy" id="272559"/>
    <lineage>
        <taxon>Bacteria</taxon>
        <taxon>Pseudomonadati</taxon>
        <taxon>Bacteroidota</taxon>
        <taxon>Bacteroidia</taxon>
        <taxon>Bacteroidales</taxon>
        <taxon>Bacteroidaceae</taxon>
        <taxon>Bacteroides</taxon>
    </lineage>
</organism>
<dbReference type="EMBL" id="CR626927">
    <property type="protein sequence ID" value="CAH06193.1"/>
    <property type="molecule type" value="Genomic_DNA"/>
</dbReference>
<dbReference type="RefSeq" id="WP_005784338.1">
    <property type="nucleotide sequence ID" value="NZ_UFTH01000001.1"/>
</dbReference>
<dbReference type="SMR" id="Q5LI35"/>
<dbReference type="PaxDb" id="272559-BF9343_0414"/>
<dbReference type="GeneID" id="60368727"/>
<dbReference type="KEGG" id="bfs:BF9343_0414"/>
<dbReference type="eggNOG" id="COG0231">
    <property type="taxonomic scope" value="Bacteria"/>
</dbReference>
<dbReference type="HOGENOM" id="CLU_074944_0_1_10"/>
<dbReference type="UniPathway" id="UPA00345"/>
<dbReference type="Proteomes" id="UP000006731">
    <property type="component" value="Chromosome"/>
</dbReference>
<dbReference type="GO" id="GO:0005737">
    <property type="term" value="C:cytoplasm"/>
    <property type="evidence" value="ECO:0007669"/>
    <property type="project" value="UniProtKB-SubCell"/>
</dbReference>
<dbReference type="GO" id="GO:0003746">
    <property type="term" value="F:translation elongation factor activity"/>
    <property type="evidence" value="ECO:0007669"/>
    <property type="project" value="UniProtKB-UniRule"/>
</dbReference>
<dbReference type="GO" id="GO:0043043">
    <property type="term" value="P:peptide biosynthetic process"/>
    <property type="evidence" value="ECO:0007669"/>
    <property type="project" value="InterPro"/>
</dbReference>
<dbReference type="CDD" id="cd04470">
    <property type="entry name" value="S1_EF-P_repeat_1"/>
    <property type="match status" value="1"/>
</dbReference>
<dbReference type="CDD" id="cd05794">
    <property type="entry name" value="S1_EF-P_repeat_2"/>
    <property type="match status" value="1"/>
</dbReference>
<dbReference type="FunFam" id="2.30.30.30:FF:000003">
    <property type="entry name" value="Elongation factor P"/>
    <property type="match status" value="1"/>
</dbReference>
<dbReference type="FunFam" id="2.40.50.140:FF:000004">
    <property type="entry name" value="Elongation factor P"/>
    <property type="match status" value="1"/>
</dbReference>
<dbReference type="FunFam" id="2.40.50.140:FF:000009">
    <property type="entry name" value="Elongation factor P"/>
    <property type="match status" value="1"/>
</dbReference>
<dbReference type="Gene3D" id="2.30.30.30">
    <property type="match status" value="1"/>
</dbReference>
<dbReference type="Gene3D" id="2.40.50.140">
    <property type="entry name" value="Nucleic acid-binding proteins"/>
    <property type="match status" value="2"/>
</dbReference>
<dbReference type="HAMAP" id="MF_00141">
    <property type="entry name" value="EF_P"/>
    <property type="match status" value="1"/>
</dbReference>
<dbReference type="InterPro" id="IPR015365">
    <property type="entry name" value="Elong-fact-P_C"/>
</dbReference>
<dbReference type="InterPro" id="IPR012340">
    <property type="entry name" value="NA-bd_OB-fold"/>
</dbReference>
<dbReference type="InterPro" id="IPR014722">
    <property type="entry name" value="Rib_uL2_dom2"/>
</dbReference>
<dbReference type="InterPro" id="IPR020599">
    <property type="entry name" value="Transl_elong_fac_P/YeiP"/>
</dbReference>
<dbReference type="InterPro" id="IPR013185">
    <property type="entry name" value="Transl_elong_KOW-like"/>
</dbReference>
<dbReference type="InterPro" id="IPR001059">
    <property type="entry name" value="Transl_elong_P/YeiP_cen"/>
</dbReference>
<dbReference type="InterPro" id="IPR013852">
    <property type="entry name" value="Transl_elong_P/YeiP_CS"/>
</dbReference>
<dbReference type="InterPro" id="IPR011768">
    <property type="entry name" value="Transl_elongation_fac_P"/>
</dbReference>
<dbReference type="InterPro" id="IPR008991">
    <property type="entry name" value="Translation_prot_SH3-like_sf"/>
</dbReference>
<dbReference type="NCBIfam" id="TIGR00038">
    <property type="entry name" value="efp"/>
    <property type="match status" value="1"/>
</dbReference>
<dbReference type="NCBIfam" id="NF001810">
    <property type="entry name" value="PRK00529.1"/>
    <property type="match status" value="1"/>
</dbReference>
<dbReference type="PANTHER" id="PTHR30053">
    <property type="entry name" value="ELONGATION FACTOR P"/>
    <property type="match status" value="1"/>
</dbReference>
<dbReference type="PANTHER" id="PTHR30053:SF12">
    <property type="entry name" value="ELONGATION FACTOR P (EF-P) FAMILY PROTEIN"/>
    <property type="match status" value="1"/>
</dbReference>
<dbReference type="Pfam" id="PF01132">
    <property type="entry name" value="EFP"/>
    <property type="match status" value="1"/>
</dbReference>
<dbReference type="Pfam" id="PF08207">
    <property type="entry name" value="EFP_N"/>
    <property type="match status" value="1"/>
</dbReference>
<dbReference type="Pfam" id="PF09285">
    <property type="entry name" value="Elong-fact-P_C"/>
    <property type="match status" value="1"/>
</dbReference>
<dbReference type="PIRSF" id="PIRSF005901">
    <property type="entry name" value="EF-P"/>
    <property type="match status" value="1"/>
</dbReference>
<dbReference type="SMART" id="SM01185">
    <property type="entry name" value="EFP"/>
    <property type="match status" value="1"/>
</dbReference>
<dbReference type="SMART" id="SM00841">
    <property type="entry name" value="Elong-fact-P_C"/>
    <property type="match status" value="1"/>
</dbReference>
<dbReference type="SUPFAM" id="SSF50249">
    <property type="entry name" value="Nucleic acid-binding proteins"/>
    <property type="match status" value="2"/>
</dbReference>
<dbReference type="SUPFAM" id="SSF50104">
    <property type="entry name" value="Translation proteins SH3-like domain"/>
    <property type="match status" value="1"/>
</dbReference>
<dbReference type="PROSITE" id="PS01275">
    <property type="entry name" value="EFP"/>
    <property type="match status" value="1"/>
</dbReference>
<keyword id="KW-0963">Cytoplasm</keyword>
<keyword id="KW-0251">Elongation factor</keyword>
<keyword id="KW-0648">Protein biosynthesis</keyword>
<evidence type="ECO:0000255" key="1">
    <source>
        <dbReference type="HAMAP-Rule" id="MF_00141"/>
    </source>
</evidence>
<sequence>MINAQDIKNGTCIRMDGKLYFCIEFLHVKPGKGNTFMRTKLKDVVSGYVLERRFNIGEKLEDVRVERRPYQYLYKEGEDYIFMNQETFDQHPIAHDLINGVDFLLEGAVVEVVSDASTETVLYADMPIKVQMKVTYTEPGLKGDTATNTLKPATVESGATVRVPLFISEGETIEIDTRDGSYVGRVKA</sequence>
<reference key="1">
    <citation type="journal article" date="2005" name="Science">
        <title>Extensive DNA inversions in the B. fragilis genome control variable gene expression.</title>
        <authorList>
            <person name="Cerdeno-Tarraga A.-M."/>
            <person name="Patrick S."/>
            <person name="Crossman L.C."/>
            <person name="Blakely G."/>
            <person name="Abratt V."/>
            <person name="Lennard N."/>
            <person name="Poxton I."/>
            <person name="Duerden B."/>
            <person name="Harris B."/>
            <person name="Quail M.A."/>
            <person name="Barron A."/>
            <person name="Clark L."/>
            <person name="Corton C."/>
            <person name="Doggett J."/>
            <person name="Holden M.T.G."/>
            <person name="Larke N."/>
            <person name="Line A."/>
            <person name="Lord A."/>
            <person name="Norbertczak H."/>
            <person name="Ormond D."/>
            <person name="Price C."/>
            <person name="Rabbinowitsch E."/>
            <person name="Woodward J."/>
            <person name="Barrell B.G."/>
            <person name="Parkhill J."/>
        </authorList>
    </citation>
    <scope>NUCLEOTIDE SEQUENCE [LARGE SCALE GENOMIC DNA]</scope>
    <source>
        <strain>ATCC 25285 / DSM 2151 / CCUG 4856 / JCM 11019 / LMG 10263 / NCTC 9343 / Onslow / VPI 2553 / EN-2</strain>
    </source>
</reference>
<gene>
    <name evidence="1" type="primary">efp</name>
    <name type="ordered locus">BF0431</name>
</gene>
<protein>
    <recommendedName>
        <fullName evidence="1">Elongation factor P</fullName>
        <shortName evidence="1">EF-P</shortName>
    </recommendedName>
</protein>
<name>EFP_BACFN</name>
<comment type="function">
    <text evidence="1">Involved in peptide bond synthesis. Stimulates efficient translation and peptide-bond synthesis on native or reconstituted 70S ribosomes in vitro. Probably functions indirectly by altering the affinity of the ribosome for aminoacyl-tRNA, thus increasing their reactivity as acceptors for peptidyl transferase.</text>
</comment>
<comment type="pathway">
    <text evidence="1">Protein biosynthesis; polypeptide chain elongation.</text>
</comment>
<comment type="subcellular location">
    <subcellularLocation>
        <location evidence="1">Cytoplasm</location>
    </subcellularLocation>
</comment>
<comment type="similarity">
    <text evidence="1">Belongs to the elongation factor P family.</text>
</comment>
<proteinExistence type="inferred from homology"/>